<accession>O33001</accession>
<keyword id="KW-1185">Reference proteome</keyword>
<keyword id="KW-0687">Ribonucleoprotein</keyword>
<keyword id="KW-0689">Ribosomal protein</keyword>
<comment type="subunit">
    <text evidence="1">Part of the 50S ribosomal subunit.</text>
</comment>
<comment type="similarity">
    <text evidence="1">Belongs to the universal ribosomal protein uL30 family.</text>
</comment>
<dbReference type="EMBL" id="Z98756">
    <property type="protein sequence ID" value="CAB11454.1"/>
    <property type="molecule type" value="Genomic_DNA"/>
</dbReference>
<dbReference type="EMBL" id="AL583923">
    <property type="protein sequence ID" value="CAC30795.1"/>
    <property type="molecule type" value="Genomic_DNA"/>
</dbReference>
<dbReference type="PIR" id="T45384">
    <property type="entry name" value="T45384"/>
</dbReference>
<dbReference type="RefSeq" id="NP_302247.1">
    <property type="nucleotide sequence ID" value="NC_002677.1"/>
</dbReference>
<dbReference type="RefSeq" id="WP_010908568.1">
    <property type="nucleotide sequence ID" value="NC_002677.1"/>
</dbReference>
<dbReference type="SMR" id="O33001"/>
<dbReference type="STRING" id="272631.gene:17575689"/>
<dbReference type="KEGG" id="mle:ML1841"/>
<dbReference type="PATRIC" id="fig|272631.5.peg.3491"/>
<dbReference type="Leproma" id="ML1841"/>
<dbReference type="eggNOG" id="COG1841">
    <property type="taxonomic scope" value="Bacteria"/>
</dbReference>
<dbReference type="HOGENOM" id="CLU_131047_2_0_11"/>
<dbReference type="OrthoDB" id="9812790at2"/>
<dbReference type="Proteomes" id="UP000000806">
    <property type="component" value="Chromosome"/>
</dbReference>
<dbReference type="GO" id="GO:0022625">
    <property type="term" value="C:cytosolic large ribosomal subunit"/>
    <property type="evidence" value="ECO:0007669"/>
    <property type="project" value="TreeGrafter"/>
</dbReference>
<dbReference type="GO" id="GO:0003735">
    <property type="term" value="F:structural constituent of ribosome"/>
    <property type="evidence" value="ECO:0007669"/>
    <property type="project" value="InterPro"/>
</dbReference>
<dbReference type="GO" id="GO:0006412">
    <property type="term" value="P:translation"/>
    <property type="evidence" value="ECO:0007669"/>
    <property type="project" value="UniProtKB-UniRule"/>
</dbReference>
<dbReference type="CDD" id="cd01658">
    <property type="entry name" value="Ribosomal_L30"/>
    <property type="match status" value="1"/>
</dbReference>
<dbReference type="FunFam" id="3.30.1390.20:FF:000001">
    <property type="entry name" value="50S ribosomal protein L30"/>
    <property type="match status" value="1"/>
</dbReference>
<dbReference type="Gene3D" id="3.30.1390.20">
    <property type="entry name" value="Ribosomal protein L30, ferredoxin-like fold domain"/>
    <property type="match status" value="1"/>
</dbReference>
<dbReference type="HAMAP" id="MF_01371_B">
    <property type="entry name" value="Ribosomal_uL30_B"/>
    <property type="match status" value="1"/>
</dbReference>
<dbReference type="InterPro" id="IPR036919">
    <property type="entry name" value="Ribo_uL30_ferredoxin-like_sf"/>
</dbReference>
<dbReference type="InterPro" id="IPR005996">
    <property type="entry name" value="Ribosomal_uL30_bac-type"/>
</dbReference>
<dbReference type="InterPro" id="IPR018038">
    <property type="entry name" value="Ribosomal_uL30_CS"/>
</dbReference>
<dbReference type="InterPro" id="IPR016082">
    <property type="entry name" value="Ribosomal_uL30_ferredoxin-like"/>
</dbReference>
<dbReference type="NCBIfam" id="TIGR01308">
    <property type="entry name" value="rpmD_bact"/>
    <property type="match status" value="1"/>
</dbReference>
<dbReference type="PANTHER" id="PTHR15892:SF2">
    <property type="entry name" value="LARGE RIBOSOMAL SUBUNIT PROTEIN UL30M"/>
    <property type="match status" value="1"/>
</dbReference>
<dbReference type="PANTHER" id="PTHR15892">
    <property type="entry name" value="MITOCHONDRIAL RIBOSOMAL PROTEIN L30"/>
    <property type="match status" value="1"/>
</dbReference>
<dbReference type="Pfam" id="PF00327">
    <property type="entry name" value="Ribosomal_L30"/>
    <property type="match status" value="1"/>
</dbReference>
<dbReference type="PIRSF" id="PIRSF002211">
    <property type="entry name" value="Ribosomal_L30_bac-type"/>
    <property type="match status" value="1"/>
</dbReference>
<dbReference type="SUPFAM" id="SSF55129">
    <property type="entry name" value="Ribosomal protein L30p/L7e"/>
    <property type="match status" value="1"/>
</dbReference>
<dbReference type="PROSITE" id="PS00634">
    <property type="entry name" value="RIBOSOMAL_L30"/>
    <property type="match status" value="1"/>
</dbReference>
<sequence>MASLKITQVRSTIGVRWKQRESLRTLGLRRIRHSVIREDNLQTRGLIAVVRHLVEVEPATGGSTPVGGGRD</sequence>
<reference key="1">
    <citation type="journal article" date="2001" name="Nature">
        <title>Massive gene decay in the leprosy bacillus.</title>
        <authorList>
            <person name="Cole S.T."/>
            <person name="Eiglmeier K."/>
            <person name="Parkhill J."/>
            <person name="James K.D."/>
            <person name="Thomson N.R."/>
            <person name="Wheeler P.R."/>
            <person name="Honore N."/>
            <person name="Garnier T."/>
            <person name="Churcher C.M."/>
            <person name="Harris D.E."/>
            <person name="Mungall K.L."/>
            <person name="Basham D."/>
            <person name="Brown D."/>
            <person name="Chillingworth T."/>
            <person name="Connor R."/>
            <person name="Davies R.M."/>
            <person name="Devlin K."/>
            <person name="Duthoy S."/>
            <person name="Feltwell T."/>
            <person name="Fraser A."/>
            <person name="Hamlin N."/>
            <person name="Holroyd S."/>
            <person name="Hornsby T."/>
            <person name="Jagels K."/>
            <person name="Lacroix C."/>
            <person name="Maclean J."/>
            <person name="Moule S."/>
            <person name="Murphy L.D."/>
            <person name="Oliver K."/>
            <person name="Quail M.A."/>
            <person name="Rajandream M.A."/>
            <person name="Rutherford K.M."/>
            <person name="Rutter S."/>
            <person name="Seeger K."/>
            <person name="Simon S."/>
            <person name="Simmonds M."/>
            <person name="Skelton J."/>
            <person name="Squares R."/>
            <person name="Squares S."/>
            <person name="Stevens K."/>
            <person name="Taylor K."/>
            <person name="Whitehead S."/>
            <person name="Woodward J.R."/>
            <person name="Barrell B.G."/>
        </authorList>
    </citation>
    <scope>NUCLEOTIDE SEQUENCE [LARGE SCALE GENOMIC DNA]</scope>
    <source>
        <strain>TN</strain>
    </source>
</reference>
<organism>
    <name type="scientific">Mycobacterium leprae (strain TN)</name>
    <dbReference type="NCBI Taxonomy" id="272631"/>
    <lineage>
        <taxon>Bacteria</taxon>
        <taxon>Bacillati</taxon>
        <taxon>Actinomycetota</taxon>
        <taxon>Actinomycetes</taxon>
        <taxon>Mycobacteriales</taxon>
        <taxon>Mycobacteriaceae</taxon>
        <taxon>Mycobacterium</taxon>
    </lineage>
</organism>
<name>RL30_MYCLE</name>
<protein>
    <recommendedName>
        <fullName evidence="1">Large ribosomal subunit protein uL30</fullName>
    </recommendedName>
    <alternativeName>
        <fullName evidence="2">50S ribosomal protein L30</fullName>
    </alternativeName>
</protein>
<evidence type="ECO:0000255" key="1">
    <source>
        <dbReference type="HAMAP-Rule" id="MF_01371"/>
    </source>
</evidence>
<evidence type="ECO:0000305" key="2"/>
<proteinExistence type="inferred from homology"/>
<gene>
    <name evidence="1" type="primary">rpmD</name>
    <name type="ordered locus">ML1841</name>
    <name type="ORF">MLCB2492.22</name>
</gene>
<feature type="chain" id="PRO_0000104598" description="Large ribosomal subunit protein uL30">
    <location>
        <begin position="1"/>
        <end position="71"/>
    </location>
</feature>